<evidence type="ECO:0000255" key="1">
    <source>
        <dbReference type="HAMAP-Rule" id="MF_00531"/>
    </source>
</evidence>
<evidence type="ECO:0000256" key="2">
    <source>
        <dbReference type="SAM" id="MobiDB-lite"/>
    </source>
</evidence>
<evidence type="ECO:0000305" key="3"/>
<sequence>MGRSKKKGPYVDRKLLEKIRKLNETGEKKVIKTWSRASMIIPEMVGHTIAVYNGMKHIPVYITENMIGHRLGEFAPTRRFGGHADKKAKKGELKK</sequence>
<organism>
    <name type="scientific">Thermotoga neapolitana (strain ATCC 49049 / DSM 4359 / NBRC 107923 / NS-E)</name>
    <dbReference type="NCBI Taxonomy" id="309803"/>
    <lineage>
        <taxon>Bacteria</taxon>
        <taxon>Thermotogati</taxon>
        <taxon>Thermotogota</taxon>
        <taxon>Thermotogae</taxon>
        <taxon>Thermotogales</taxon>
        <taxon>Thermotogaceae</taxon>
        <taxon>Thermotoga</taxon>
    </lineage>
</organism>
<proteinExistence type="inferred from homology"/>
<dbReference type="EMBL" id="CP000916">
    <property type="protein sequence ID" value="ACM23173.1"/>
    <property type="molecule type" value="Genomic_DNA"/>
</dbReference>
<dbReference type="RefSeq" id="WP_015919490.1">
    <property type="nucleotide sequence ID" value="NC_011978.1"/>
</dbReference>
<dbReference type="SMR" id="B9K890"/>
<dbReference type="STRING" id="309803.CTN_0997"/>
<dbReference type="KEGG" id="tna:CTN_0997"/>
<dbReference type="eggNOG" id="COG0185">
    <property type="taxonomic scope" value="Bacteria"/>
</dbReference>
<dbReference type="HOGENOM" id="CLU_144911_0_1_0"/>
<dbReference type="Proteomes" id="UP000000445">
    <property type="component" value="Chromosome"/>
</dbReference>
<dbReference type="GO" id="GO:0005737">
    <property type="term" value="C:cytoplasm"/>
    <property type="evidence" value="ECO:0007669"/>
    <property type="project" value="UniProtKB-ARBA"/>
</dbReference>
<dbReference type="GO" id="GO:0015935">
    <property type="term" value="C:small ribosomal subunit"/>
    <property type="evidence" value="ECO:0007669"/>
    <property type="project" value="InterPro"/>
</dbReference>
<dbReference type="GO" id="GO:0019843">
    <property type="term" value="F:rRNA binding"/>
    <property type="evidence" value="ECO:0007669"/>
    <property type="project" value="UniProtKB-UniRule"/>
</dbReference>
<dbReference type="GO" id="GO:0003735">
    <property type="term" value="F:structural constituent of ribosome"/>
    <property type="evidence" value="ECO:0007669"/>
    <property type="project" value="InterPro"/>
</dbReference>
<dbReference type="GO" id="GO:0000028">
    <property type="term" value="P:ribosomal small subunit assembly"/>
    <property type="evidence" value="ECO:0007669"/>
    <property type="project" value="TreeGrafter"/>
</dbReference>
<dbReference type="GO" id="GO:0006412">
    <property type="term" value="P:translation"/>
    <property type="evidence" value="ECO:0007669"/>
    <property type="project" value="UniProtKB-UniRule"/>
</dbReference>
<dbReference type="FunFam" id="3.30.860.10:FF:000001">
    <property type="entry name" value="30S ribosomal protein S19"/>
    <property type="match status" value="1"/>
</dbReference>
<dbReference type="Gene3D" id="3.30.860.10">
    <property type="entry name" value="30s Ribosomal Protein S19, Chain A"/>
    <property type="match status" value="1"/>
</dbReference>
<dbReference type="HAMAP" id="MF_00531">
    <property type="entry name" value="Ribosomal_uS19"/>
    <property type="match status" value="1"/>
</dbReference>
<dbReference type="InterPro" id="IPR002222">
    <property type="entry name" value="Ribosomal_uS19"/>
</dbReference>
<dbReference type="InterPro" id="IPR005732">
    <property type="entry name" value="Ribosomal_uS19_bac-type"/>
</dbReference>
<dbReference type="InterPro" id="IPR020934">
    <property type="entry name" value="Ribosomal_uS19_CS"/>
</dbReference>
<dbReference type="InterPro" id="IPR023575">
    <property type="entry name" value="Ribosomal_uS19_SF"/>
</dbReference>
<dbReference type="NCBIfam" id="TIGR01050">
    <property type="entry name" value="rpsS_bact"/>
    <property type="match status" value="1"/>
</dbReference>
<dbReference type="PANTHER" id="PTHR11880">
    <property type="entry name" value="RIBOSOMAL PROTEIN S19P FAMILY MEMBER"/>
    <property type="match status" value="1"/>
</dbReference>
<dbReference type="PANTHER" id="PTHR11880:SF8">
    <property type="entry name" value="SMALL RIBOSOMAL SUBUNIT PROTEIN US19M"/>
    <property type="match status" value="1"/>
</dbReference>
<dbReference type="Pfam" id="PF00203">
    <property type="entry name" value="Ribosomal_S19"/>
    <property type="match status" value="1"/>
</dbReference>
<dbReference type="PIRSF" id="PIRSF002144">
    <property type="entry name" value="Ribosomal_S19"/>
    <property type="match status" value="1"/>
</dbReference>
<dbReference type="PRINTS" id="PR00975">
    <property type="entry name" value="RIBOSOMALS19"/>
</dbReference>
<dbReference type="SUPFAM" id="SSF54570">
    <property type="entry name" value="Ribosomal protein S19"/>
    <property type="match status" value="1"/>
</dbReference>
<dbReference type="PROSITE" id="PS00323">
    <property type="entry name" value="RIBOSOMAL_S19"/>
    <property type="match status" value="1"/>
</dbReference>
<keyword id="KW-0687">Ribonucleoprotein</keyword>
<keyword id="KW-0689">Ribosomal protein</keyword>
<keyword id="KW-0694">RNA-binding</keyword>
<keyword id="KW-0699">rRNA-binding</keyword>
<feature type="chain" id="PRO_1000146420" description="Small ribosomal subunit protein uS19">
    <location>
        <begin position="1"/>
        <end position="95"/>
    </location>
</feature>
<feature type="region of interest" description="Disordered" evidence="2">
    <location>
        <begin position="76"/>
        <end position="95"/>
    </location>
</feature>
<feature type="compositionally biased region" description="Basic and acidic residues" evidence="2">
    <location>
        <begin position="82"/>
        <end position="95"/>
    </location>
</feature>
<name>RS19_THENN</name>
<accession>B9K890</accession>
<reference key="1">
    <citation type="submission" date="2007-11" db="EMBL/GenBank/DDBJ databases">
        <title>The genome sequence of the hyperthermophilic bacterium Thermotoga neapolitana.</title>
        <authorList>
            <person name="Lim S.K."/>
            <person name="Kim J.S."/>
            <person name="Cha S.H."/>
            <person name="Park B.C."/>
            <person name="Lee D.S."/>
            <person name="Tae H.S."/>
            <person name="Kim S.-J."/>
            <person name="Kim J.J."/>
            <person name="Park K.J."/>
            <person name="Lee S.Y."/>
        </authorList>
    </citation>
    <scope>NUCLEOTIDE SEQUENCE [LARGE SCALE GENOMIC DNA]</scope>
    <source>
        <strain>ATCC 49049 / DSM 4359 / NBRC 107923 / NS-E</strain>
    </source>
</reference>
<protein>
    <recommendedName>
        <fullName evidence="1">Small ribosomal subunit protein uS19</fullName>
    </recommendedName>
    <alternativeName>
        <fullName evidence="3">30S ribosomal protein S19</fullName>
    </alternativeName>
</protein>
<comment type="function">
    <text evidence="1">Protein S19 forms a complex with S13 that binds strongly to the 16S ribosomal RNA.</text>
</comment>
<comment type="similarity">
    <text evidence="1">Belongs to the universal ribosomal protein uS19 family.</text>
</comment>
<gene>
    <name evidence="1" type="primary">rpsS</name>
    <name type="ordered locus">CTN_0997</name>
</gene>